<proteinExistence type="inferred from homology"/>
<evidence type="ECO:0000255" key="1">
    <source>
        <dbReference type="HAMAP-Rule" id="MF_01307"/>
    </source>
</evidence>
<evidence type="ECO:0000305" key="2"/>
<reference key="1">
    <citation type="journal article" date="1991" name="Mol. Gen. Genet.">
        <title>Organization and nucleotide sequence of ten ribosomal protein genes from the region equivalent to the spectinomycin operon in the archaebacterium Halobacterium marismortui.</title>
        <authorList>
            <person name="Scholzen T."/>
            <person name="Arndt E."/>
        </authorList>
    </citation>
    <scope>NUCLEOTIDE SEQUENCE [GENOMIC DNA]</scope>
</reference>
<reference key="2">
    <citation type="journal article" date="2004" name="Genome Res.">
        <title>Genome sequence of Haloarcula marismortui: a halophilic archaeon from the Dead Sea.</title>
        <authorList>
            <person name="Baliga N.S."/>
            <person name="Bonneau R."/>
            <person name="Facciotti M.T."/>
            <person name="Pan M."/>
            <person name="Glusman G."/>
            <person name="Deutsch E.W."/>
            <person name="Shannon P."/>
            <person name="Chiu Y."/>
            <person name="Weng R.S."/>
            <person name="Gan R.R."/>
            <person name="Hung P."/>
            <person name="Date S.V."/>
            <person name="Marcotte E."/>
            <person name="Hood L."/>
            <person name="Ng W.V."/>
        </authorList>
    </citation>
    <scope>NUCLEOTIDE SEQUENCE [LARGE SCALE GENOMIC DNA]</scope>
    <source>
        <strain>ATCC 43049 / DSM 3752 / JCM 8966 / VKM B-1809</strain>
    </source>
</reference>
<sequence>MSANNGWEPRTRLGKQVVEGEIDSMQEALNSGLPLKESEVVDQLVPDLEDEVLDINMVQRMTDSGRRVKFRCVVAVGNRDGLIGYAEGRDDQVGGAIQKAIDIAKLNIIDVSRGCGSWECGCGRPHTVALRTEGKAGSVEVELQPAPRGLGLAGGETVRKVLELAGIEDIWTRSSGNTRTTVNFAKATFNALQNTAEARVPERTFEKREVIE</sequence>
<organism>
    <name type="scientific">Haloarcula marismortui (strain ATCC 43049 / DSM 3752 / JCM 8966 / VKM B-1809)</name>
    <name type="common">Halobacterium marismortui</name>
    <dbReference type="NCBI Taxonomy" id="272569"/>
    <lineage>
        <taxon>Archaea</taxon>
        <taxon>Methanobacteriati</taxon>
        <taxon>Methanobacteriota</taxon>
        <taxon>Stenosarchaea group</taxon>
        <taxon>Halobacteria</taxon>
        <taxon>Halobacteriales</taxon>
        <taxon>Haloarculaceae</taxon>
        <taxon>Haloarcula</taxon>
    </lineage>
</organism>
<comment type="function">
    <text evidence="1">With S4 and S12 plays an important role in translational accuracy.</text>
</comment>
<comment type="subunit">
    <text evidence="1">Part of the 30S ribosomal subunit. Contacts protein S4.</text>
</comment>
<comment type="domain">
    <text>The N-terminal domain interacts with the head of the 30S subunit; the C-terminal domain interacts with the body and contacts protein S4. The interaction surface between S4 and S5 is involved in control of translational fidelity.</text>
</comment>
<comment type="similarity">
    <text evidence="1">Belongs to the universal ribosomal protein uS5 family.</text>
</comment>
<protein>
    <recommendedName>
        <fullName evidence="1">Small ribosomal subunit protein uS5</fullName>
    </recommendedName>
    <alternativeName>
        <fullName evidence="2">30S ribosomal protein S5</fullName>
    </alternativeName>
    <alternativeName>
        <fullName>HmaS5</fullName>
    </alternativeName>
</protein>
<accession>P26815</accession>
<accession>Q5V1U2</accession>
<feature type="chain" id="PRO_0000131645" description="Small ribosomal subunit protein uS5">
    <location>
        <begin position="1"/>
        <end position="212"/>
    </location>
</feature>
<feature type="domain" description="S5 DRBM" evidence="1">
    <location>
        <begin position="48"/>
        <end position="111"/>
    </location>
</feature>
<name>RS5_HALMA</name>
<dbReference type="EMBL" id="X58395">
    <property type="protein sequence ID" value="CAA41291.1"/>
    <property type="molecule type" value="Genomic_DNA"/>
</dbReference>
<dbReference type="EMBL" id="AY596297">
    <property type="protein sequence ID" value="AAV46510.1"/>
    <property type="molecule type" value="Genomic_DNA"/>
</dbReference>
<dbReference type="PIR" id="S16542">
    <property type="entry name" value="S16542"/>
</dbReference>
<dbReference type="RefSeq" id="WP_004957374.1">
    <property type="nucleotide sequence ID" value="NZ_CP039138.1"/>
</dbReference>
<dbReference type="SMR" id="P26815"/>
<dbReference type="STRING" id="272569.rrnAC1592"/>
<dbReference type="PaxDb" id="272569-rrnAC1592"/>
<dbReference type="EnsemblBacteria" id="AAV46510">
    <property type="protein sequence ID" value="AAV46510"/>
    <property type="gene ID" value="rrnAC1592"/>
</dbReference>
<dbReference type="KEGG" id="hma:rrnAC1592"/>
<dbReference type="PATRIC" id="fig|272569.17.peg.2281"/>
<dbReference type="eggNOG" id="arCOG04087">
    <property type="taxonomic scope" value="Archaea"/>
</dbReference>
<dbReference type="HOGENOM" id="CLU_065898_0_1_2"/>
<dbReference type="Proteomes" id="UP000001169">
    <property type="component" value="Chromosome I"/>
</dbReference>
<dbReference type="GO" id="GO:0015935">
    <property type="term" value="C:small ribosomal subunit"/>
    <property type="evidence" value="ECO:0007669"/>
    <property type="project" value="InterPro"/>
</dbReference>
<dbReference type="GO" id="GO:0019843">
    <property type="term" value="F:rRNA binding"/>
    <property type="evidence" value="ECO:0007669"/>
    <property type="project" value="UniProtKB-UniRule"/>
</dbReference>
<dbReference type="GO" id="GO:0003735">
    <property type="term" value="F:structural constituent of ribosome"/>
    <property type="evidence" value="ECO:0007669"/>
    <property type="project" value="InterPro"/>
</dbReference>
<dbReference type="GO" id="GO:0006412">
    <property type="term" value="P:translation"/>
    <property type="evidence" value="ECO:0007669"/>
    <property type="project" value="UniProtKB-UniRule"/>
</dbReference>
<dbReference type="FunFam" id="3.30.160.20:FF:000002">
    <property type="entry name" value="40S ribosomal protein S2"/>
    <property type="match status" value="1"/>
</dbReference>
<dbReference type="FunFam" id="3.30.230.10:FF:000004">
    <property type="entry name" value="40S ribosomal protein S2"/>
    <property type="match status" value="1"/>
</dbReference>
<dbReference type="Gene3D" id="3.30.160.20">
    <property type="match status" value="1"/>
</dbReference>
<dbReference type="Gene3D" id="3.30.230.10">
    <property type="match status" value="1"/>
</dbReference>
<dbReference type="HAMAP" id="MF_01307_A">
    <property type="entry name" value="Ribosomal_uS5_A"/>
    <property type="match status" value="1"/>
</dbReference>
<dbReference type="InterPro" id="IPR020568">
    <property type="entry name" value="Ribosomal_Su5_D2-typ_SF"/>
</dbReference>
<dbReference type="InterPro" id="IPR000851">
    <property type="entry name" value="Ribosomal_uS5"/>
</dbReference>
<dbReference type="InterPro" id="IPR047866">
    <property type="entry name" value="Ribosomal_uS5_arc"/>
</dbReference>
<dbReference type="InterPro" id="IPR005324">
    <property type="entry name" value="Ribosomal_uS5_C"/>
</dbReference>
<dbReference type="InterPro" id="IPR005711">
    <property type="entry name" value="Ribosomal_uS5_euk/arc"/>
</dbReference>
<dbReference type="InterPro" id="IPR013810">
    <property type="entry name" value="Ribosomal_uS5_N"/>
</dbReference>
<dbReference type="InterPro" id="IPR018192">
    <property type="entry name" value="Ribosomal_uS5_N_CS"/>
</dbReference>
<dbReference type="InterPro" id="IPR014721">
    <property type="entry name" value="Ribsml_uS5_D2-typ_fold_subgr"/>
</dbReference>
<dbReference type="NCBIfam" id="NF003125">
    <property type="entry name" value="PRK04044.1"/>
    <property type="match status" value="1"/>
</dbReference>
<dbReference type="NCBIfam" id="TIGR01020">
    <property type="entry name" value="uS5_euk_arch"/>
    <property type="match status" value="1"/>
</dbReference>
<dbReference type="PANTHER" id="PTHR48277">
    <property type="entry name" value="MITOCHONDRIAL RIBOSOMAL PROTEIN S5"/>
    <property type="match status" value="1"/>
</dbReference>
<dbReference type="PANTHER" id="PTHR48277:SF1">
    <property type="entry name" value="MITOCHONDRIAL RIBOSOMAL PROTEIN S5"/>
    <property type="match status" value="1"/>
</dbReference>
<dbReference type="Pfam" id="PF00333">
    <property type="entry name" value="Ribosomal_S5"/>
    <property type="match status" value="1"/>
</dbReference>
<dbReference type="Pfam" id="PF03719">
    <property type="entry name" value="Ribosomal_S5_C"/>
    <property type="match status" value="1"/>
</dbReference>
<dbReference type="SUPFAM" id="SSF54768">
    <property type="entry name" value="dsRNA-binding domain-like"/>
    <property type="match status" value="1"/>
</dbReference>
<dbReference type="SUPFAM" id="SSF54211">
    <property type="entry name" value="Ribosomal protein S5 domain 2-like"/>
    <property type="match status" value="1"/>
</dbReference>
<dbReference type="PROSITE" id="PS00585">
    <property type="entry name" value="RIBOSOMAL_S5"/>
    <property type="match status" value="1"/>
</dbReference>
<dbReference type="PROSITE" id="PS50881">
    <property type="entry name" value="S5_DSRBD"/>
    <property type="match status" value="1"/>
</dbReference>
<gene>
    <name evidence="1" type="primary">rps5</name>
    <name type="ordered locus">rrnAC1592</name>
</gene>
<keyword id="KW-1185">Reference proteome</keyword>
<keyword id="KW-0687">Ribonucleoprotein</keyword>
<keyword id="KW-0689">Ribosomal protein</keyword>
<keyword id="KW-0694">RNA-binding</keyword>
<keyword id="KW-0699">rRNA-binding</keyword>